<sequence length="317" mass="35108">MKKISLTLLILLLALTAAACGSKNESTASKASGTASEKKKIEYLDKTYEVTVPTDKIAITGSVESMEDAKLLDVHPQGAISFSGKFPDMFKDITDKAEPTGEKMEPNIEKILEMKPDVILASTKFPEKTLQKISTAGTTIPVSHISSNWKENMMLLAQLTGKEKKAKKIIADYEQDLKEIKTKINDKAKDSKALVIRIRQGNIYIYPEQVYFNSTLYGDLGLKAPNEVKAAKAQELSSLEKLSEMNPDHIFVQFSDDENADKPDALKDLEKNPIWKSLKAVKEDHVYVNSVDPLAQGGTAWSKVRFLKAAAEKLTQN</sequence>
<proteinExistence type="evidence at protein level"/>
<comment type="function">
    <text evidence="3">Involved in the uptake of iron.</text>
</comment>
<comment type="function">
    <text evidence="8">Part of the ABC transporter complex FeuABC/YusV involved in import of the catecholate siderophores bacillibactin and enterobactin.</text>
</comment>
<comment type="subunit">
    <text evidence="7">The complex is composed of one ATP-binding protein (YusV), two transmembrane proteins (FeuB and FeuC) and a solute-binding protein (FeuA).</text>
</comment>
<comment type="subcellular location">
    <subcellularLocation>
        <location evidence="5 6 8">Cell membrane</location>
        <topology evidence="8">Lipid-anchor</topology>
    </subcellularLocation>
    <subcellularLocation>
        <location evidence="3">Cytoplasm</location>
    </subcellularLocation>
    <subcellularLocation>
        <location evidence="5 6">Membrane raft</location>
        <topology evidence="8">Lipid-anchor</topology>
    </subcellularLocation>
    <text evidence="5 6">Present in detergent-resistant membrane (DRM) fractions that may be equivalent to eukaryotic membrane rafts; these rafts include proteins involved in signaling, molecule trafficking and protein secretion.</text>
</comment>
<comment type="induction">
    <text evidence="3 4">Repressed by fur. Induced by Btr in iron-limited conditions.</text>
</comment>
<comment type="disruption phenotype">
    <text evidence="3">Strains lacking this gene show a reduction in growth stimulation by the catecholate siderophores enterobactin and bacillibactin.</text>
</comment>
<comment type="similarity">
    <text evidence="7">Belongs to the bacterial solute-binding protein 8 family.</text>
</comment>
<dbReference type="EMBL" id="L19954">
    <property type="protein sequence ID" value="AAA64354.1"/>
    <property type="molecule type" value="Genomic_DNA"/>
</dbReference>
<dbReference type="EMBL" id="AB002150">
    <property type="protein sequence ID" value="BAA19496.1"/>
    <property type="molecule type" value="Genomic_DNA"/>
</dbReference>
<dbReference type="EMBL" id="AL009126">
    <property type="protein sequence ID" value="CAB11939.1"/>
    <property type="molecule type" value="Genomic_DNA"/>
</dbReference>
<dbReference type="PIR" id="I39842">
    <property type="entry name" value="I39842"/>
</dbReference>
<dbReference type="RefSeq" id="NP_388044.1">
    <property type="nucleotide sequence ID" value="NC_000964.3"/>
</dbReference>
<dbReference type="RefSeq" id="WP_003234978.1">
    <property type="nucleotide sequence ID" value="NZ_OZ025638.1"/>
</dbReference>
<dbReference type="PDB" id="2PHZ">
    <property type="method" value="X-ray"/>
    <property type="resolution" value="2.15 A"/>
    <property type="chains" value="A=21-317"/>
</dbReference>
<dbReference type="PDB" id="2WHY">
    <property type="method" value="X-ray"/>
    <property type="resolution" value="1.70 A"/>
    <property type="chains" value="A=21-317"/>
</dbReference>
<dbReference type="PDB" id="2WI8">
    <property type="method" value="X-ray"/>
    <property type="resolution" value="1.55 A"/>
    <property type="chains" value="A=21-317"/>
</dbReference>
<dbReference type="PDB" id="2XUZ">
    <property type="method" value="X-ray"/>
    <property type="resolution" value="1.90 A"/>
    <property type="chains" value="A=21-317"/>
</dbReference>
<dbReference type="PDB" id="2XV1">
    <property type="method" value="X-ray"/>
    <property type="resolution" value="2.15 A"/>
    <property type="chains" value="A=21-317"/>
</dbReference>
<dbReference type="PDBsum" id="2PHZ"/>
<dbReference type="PDBsum" id="2WHY"/>
<dbReference type="PDBsum" id="2WI8"/>
<dbReference type="PDBsum" id="2XUZ"/>
<dbReference type="PDBsum" id="2XV1"/>
<dbReference type="SMR" id="P40409"/>
<dbReference type="FunCoup" id="P40409">
    <property type="interactions" value="26"/>
</dbReference>
<dbReference type="STRING" id="224308.BSU01630"/>
<dbReference type="TCDB" id="3.A.1.14.15">
    <property type="family name" value="the atp-binding cassette (abc) superfamily"/>
</dbReference>
<dbReference type="PaxDb" id="224308-BSU01630"/>
<dbReference type="DNASU" id="938891"/>
<dbReference type="EnsemblBacteria" id="CAB11939">
    <property type="protein sequence ID" value="CAB11939"/>
    <property type="gene ID" value="BSU_01630"/>
</dbReference>
<dbReference type="GeneID" id="938891"/>
<dbReference type="KEGG" id="bsu:BSU01630"/>
<dbReference type="PATRIC" id="fig|224308.179.peg.169"/>
<dbReference type="eggNOG" id="COG0614">
    <property type="taxonomic scope" value="Bacteria"/>
</dbReference>
<dbReference type="InParanoid" id="P40409"/>
<dbReference type="OrthoDB" id="26763at2"/>
<dbReference type="PhylomeDB" id="P40409"/>
<dbReference type="BioCyc" id="BSUB:BSU01630-MONOMER"/>
<dbReference type="EvolutionaryTrace" id="P40409"/>
<dbReference type="Proteomes" id="UP000001570">
    <property type="component" value="Chromosome"/>
</dbReference>
<dbReference type="GO" id="GO:0005737">
    <property type="term" value="C:cytoplasm"/>
    <property type="evidence" value="ECO:0007669"/>
    <property type="project" value="UniProtKB-SubCell"/>
</dbReference>
<dbReference type="GO" id="GO:0045121">
    <property type="term" value="C:membrane raft"/>
    <property type="evidence" value="ECO:0007669"/>
    <property type="project" value="UniProtKB-SubCell"/>
</dbReference>
<dbReference type="GO" id="GO:0030288">
    <property type="term" value="C:outer membrane-bounded periplasmic space"/>
    <property type="evidence" value="ECO:0000318"/>
    <property type="project" value="GO_Central"/>
</dbReference>
<dbReference type="GO" id="GO:0005886">
    <property type="term" value="C:plasma membrane"/>
    <property type="evidence" value="ECO:0007669"/>
    <property type="project" value="UniProtKB-SubCell"/>
</dbReference>
<dbReference type="GO" id="GO:1901678">
    <property type="term" value="P:iron coordination entity transport"/>
    <property type="evidence" value="ECO:0007669"/>
    <property type="project" value="UniProtKB-ARBA"/>
</dbReference>
<dbReference type="CDD" id="cd01138">
    <property type="entry name" value="FeuA"/>
    <property type="match status" value="1"/>
</dbReference>
<dbReference type="FunFam" id="3.40.50.1980:FF:000020">
    <property type="entry name" value="Iron-uptake system-binding protein"/>
    <property type="match status" value="1"/>
</dbReference>
<dbReference type="Gene3D" id="3.40.50.1980">
    <property type="entry name" value="Nitrogenase molybdenum iron protein domain"/>
    <property type="match status" value="2"/>
</dbReference>
<dbReference type="InterPro" id="IPR002491">
    <property type="entry name" value="ABC_transptr_periplasmic_BD"/>
</dbReference>
<dbReference type="InterPro" id="IPR051313">
    <property type="entry name" value="Bact_iron-sidero_bind"/>
</dbReference>
<dbReference type="PANTHER" id="PTHR30532">
    <property type="entry name" value="IRON III DICITRATE-BINDING PERIPLASMIC PROTEIN"/>
    <property type="match status" value="1"/>
</dbReference>
<dbReference type="PANTHER" id="PTHR30532:SF10">
    <property type="entry name" value="IRON-UPTAKE SYSTEM-BINDING PROTEIN"/>
    <property type="match status" value="1"/>
</dbReference>
<dbReference type="Pfam" id="PF01497">
    <property type="entry name" value="Peripla_BP_2"/>
    <property type="match status" value="1"/>
</dbReference>
<dbReference type="SUPFAM" id="SSF53807">
    <property type="entry name" value="Helical backbone' metal receptor"/>
    <property type="match status" value="1"/>
</dbReference>
<dbReference type="PROSITE" id="PS50983">
    <property type="entry name" value="FE_B12_PBP"/>
    <property type="match status" value="1"/>
</dbReference>
<dbReference type="PROSITE" id="PS51257">
    <property type="entry name" value="PROKAR_LIPOPROTEIN"/>
    <property type="match status" value="1"/>
</dbReference>
<organism>
    <name type="scientific">Bacillus subtilis (strain 168)</name>
    <dbReference type="NCBI Taxonomy" id="224308"/>
    <lineage>
        <taxon>Bacteria</taxon>
        <taxon>Bacillati</taxon>
        <taxon>Bacillota</taxon>
        <taxon>Bacilli</taxon>
        <taxon>Bacillales</taxon>
        <taxon>Bacillaceae</taxon>
        <taxon>Bacillus</taxon>
    </lineage>
</organism>
<evidence type="ECO:0000255" key="1">
    <source>
        <dbReference type="PROSITE-ProRule" id="PRU00303"/>
    </source>
</evidence>
<evidence type="ECO:0000255" key="2">
    <source>
        <dbReference type="PROSITE-ProRule" id="PRU00344"/>
    </source>
</evidence>
<evidence type="ECO:0000269" key="3">
    <source>
    </source>
</evidence>
<evidence type="ECO:0000269" key="4">
    <source>
    </source>
</evidence>
<evidence type="ECO:0000269" key="5">
    <source>
    </source>
</evidence>
<evidence type="ECO:0000269" key="6">
    <source>
    </source>
</evidence>
<evidence type="ECO:0000305" key="7"/>
<evidence type="ECO:0000305" key="8">
    <source>
    </source>
</evidence>
<evidence type="ECO:0007829" key="9">
    <source>
        <dbReference type="PDB" id="2WI8"/>
    </source>
</evidence>
<gene>
    <name type="primary">feuA</name>
    <name type="ordered locus">BSU01630</name>
</gene>
<keyword id="KW-0002">3D-structure</keyword>
<keyword id="KW-1003">Cell membrane</keyword>
<keyword id="KW-0963">Cytoplasm</keyword>
<keyword id="KW-0406">Ion transport</keyword>
<keyword id="KW-0408">Iron</keyword>
<keyword id="KW-0410">Iron transport</keyword>
<keyword id="KW-0449">Lipoprotein</keyword>
<keyword id="KW-0472">Membrane</keyword>
<keyword id="KW-0564">Palmitate</keyword>
<keyword id="KW-1185">Reference proteome</keyword>
<keyword id="KW-0732">Signal</keyword>
<keyword id="KW-0813">Transport</keyword>
<reference key="1">
    <citation type="journal article" date="1994" name="Biochim. Biophys. Acta">
        <title>Isolation of Tn917 insertional mutants of Bacillus subtilis that are resistant to the protonophore carbonyl cyanide m-chlorophenylhydrazone.</title>
        <authorList>
            <person name="Quirk P.G."/>
            <person name="Guffanti A.A."/>
            <person name="Clejan S."/>
            <person name="Cheng J."/>
            <person name="Krulwich T.A."/>
        </authorList>
    </citation>
    <scope>NUCLEOTIDE SEQUENCE [GENOMIC DNA]</scope>
    <source>
        <strain>BD99 / MS94</strain>
    </source>
</reference>
<reference key="2">
    <citation type="journal article" date="1997" name="Microbiology">
        <title>Sequence and analysis of a 31 kb segment of the Bacillus subtilis chromosome in the area of the rrnH and rrnG operons.</title>
        <authorList>
            <person name="Liu H."/>
            <person name="Haga K."/>
            <person name="Yasumoto K."/>
            <person name="Ohashi Y."/>
            <person name="Yoshikawa H."/>
            <person name="Takahashi H."/>
        </authorList>
    </citation>
    <scope>NUCLEOTIDE SEQUENCE [GENOMIC DNA]</scope>
    <source>
        <strain>168</strain>
    </source>
</reference>
<reference key="3">
    <citation type="journal article" date="1997" name="Nature">
        <title>The complete genome sequence of the Gram-positive bacterium Bacillus subtilis.</title>
        <authorList>
            <person name="Kunst F."/>
            <person name="Ogasawara N."/>
            <person name="Moszer I."/>
            <person name="Albertini A.M."/>
            <person name="Alloni G."/>
            <person name="Azevedo V."/>
            <person name="Bertero M.G."/>
            <person name="Bessieres P."/>
            <person name="Bolotin A."/>
            <person name="Borchert S."/>
            <person name="Borriss R."/>
            <person name="Boursier L."/>
            <person name="Brans A."/>
            <person name="Braun M."/>
            <person name="Brignell S.C."/>
            <person name="Bron S."/>
            <person name="Brouillet S."/>
            <person name="Bruschi C.V."/>
            <person name="Caldwell B."/>
            <person name="Capuano V."/>
            <person name="Carter N.M."/>
            <person name="Choi S.-K."/>
            <person name="Codani J.-J."/>
            <person name="Connerton I.F."/>
            <person name="Cummings N.J."/>
            <person name="Daniel R.A."/>
            <person name="Denizot F."/>
            <person name="Devine K.M."/>
            <person name="Duesterhoeft A."/>
            <person name="Ehrlich S.D."/>
            <person name="Emmerson P.T."/>
            <person name="Entian K.-D."/>
            <person name="Errington J."/>
            <person name="Fabret C."/>
            <person name="Ferrari E."/>
            <person name="Foulger D."/>
            <person name="Fritz C."/>
            <person name="Fujita M."/>
            <person name="Fujita Y."/>
            <person name="Fuma S."/>
            <person name="Galizzi A."/>
            <person name="Galleron N."/>
            <person name="Ghim S.-Y."/>
            <person name="Glaser P."/>
            <person name="Goffeau A."/>
            <person name="Golightly E.J."/>
            <person name="Grandi G."/>
            <person name="Guiseppi G."/>
            <person name="Guy B.J."/>
            <person name="Haga K."/>
            <person name="Haiech J."/>
            <person name="Harwood C.R."/>
            <person name="Henaut A."/>
            <person name="Hilbert H."/>
            <person name="Holsappel S."/>
            <person name="Hosono S."/>
            <person name="Hullo M.-F."/>
            <person name="Itaya M."/>
            <person name="Jones L.-M."/>
            <person name="Joris B."/>
            <person name="Karamata D."/>
            <person name="Kasahara Y."/>
            <person name="Klaerr-Blanchard M."/>
            <person name="Klein C."/>
            <person name="Kobayashi Y."/>
            <person name="Koetter P."/>
            <person name="Koningstein G."/>
            <person name="Krogh S."/>
            <person name="Kumano M."/>
            <person name="Kurita K."/>
            <person name="Lapidus A."/>
            <person name="Lardinois S."/>
            <person name="Lauber J."/>
            <person name="Lazarevic V."/>
            <person name="Lee S.-M."/>
            <person name="Levine A."/>
            <person name="Liu H."/>
            <person name="Masuda S."/>
            <person name="Mauel C."/>
            <person name="Medigue C."/>
            <person name="Medina N."/>
            <person name="Mellado R.P."/>
            <person name="Mizuno M."/>
            <person name="Moestl D."/>
            <person name="Nakai S."/>
            <person name="Noback M."/>
            <person name="Noone D."/>
            <person name="O'Reilly M."/>
            <person name="Ogawa K."/>
            <person name="Ogiwara A."/>
            <person name="Oudega B."/>
            <person name="Park S.-H."/>
            <person name="Parro V."/>
            <person name="Pohl T.M."/>
            <person name="Portetelle D."/>
            <person name="Porwollik S."/>
            <person name="Prescott A.M."/>
            <person name="Presecan E."/>
            <person name="Pujic P."/>
            <person name="Purnelle B."/>
            <person name="Rapoport G."/>
            <person name="Rey M."/>
            <person name="Reynolds S."/>
            <person name="Rieger M."/>
            <person name="Rivolta C."/>
            <person name="Rocha E."/>
            <person name="Roche B."/>
            <person name="Rose M."/>
            <person name="Sadaie Y."/>
            <person name="Sato T."/>
            <person name="Scanlan E."/>
            <person name="Schleich S."/>
            <person name="Schroeter R."/>
            <person name="Scoffone F."/>
            <person name="Sekiguchi J."/>
            <person name="Sekowska A."/>
            <person name="Seror S.J."/>
            <person name="Serror P."/>
            <person name="Shin B.-S."/>
            <person name="Soldo B."/>
            <person name="Sorokin A."/>
            <person name="Tacconi E."/>
            <person name="Takagi T."/>
            <person name="Takahashi H."/>
            <person name="Takemaru K."/>
            <person name="Takeuchi M."/>
            <person name="Tamakoshi A."/>
            <person name="Tanaka T."/>
            <person name="Terpstra P."/>
            <person name="Tognoni A."/>
            <person name="Tosato V."/>
            <person name="Uchiyama S."/>
            <person name="Vandenbol M."/>
            <person name="Vannier F."/>
            <person name="Vassarotti A."/>
            <person name="Viari A."/>
            <person name="Wambutt R."/>
            <person name="Wedler E."/>
            <person name="Wedler H."/>
            <person name="Weitzenegger T."/>
            <person name="Winters P."/>
            <person name="Wipat A."/>
            <person name="Yamamoto H."/>
            <person name="Yamane K."/>
            <person name="Yasumoto K."/>
            <person name="Yata K."/>
            <person name="Yoshida K."/>
            <person name="Yoshikawa H.-F."/>
            <person name="Zumstein E."/>
            <person name="Yoshikawa H."/>
            <person name="Danchin A."/>
        </authorList>
    </citation>
    <scope>NUCLEOTIDE SEQUENCE [LARGE SCALE GENOMIC DNA]</scope>
    <source>
        <strain>168</strain>
    </source>
</reference>
<reference key="4">
    <citation type="journal article" date="2006" name="J. Bacteriol.">
        <title>Role of the Fur regulon in iron transport in Bacillus subtilis.</title>
        <authorList>
            <person name="Ollinger J."/>
            <person name="Song K.-B."/>
            <person name="Antelmann H."/>
            <person name="Hecker M."/>
            <person name="Helmann J.D."/>
        </authorList>
    </citation>
    <scope>FUNCTION</scope>
    <scope>SUBCELLULAR LOCATION</scope>
    <scope>POSSIBLE SUBUNIT</scope>
    <scope>DISRUPTION PHENOTYPE</scope>
    <scope>INDUCTION</scope>
    <source>
        <strain>168</strain>
    </source>
</reference>
<reference key="5">
    <citation type="journal article" date="2007" name="Mol. Microbiol.">
        <title>Substrate induction of siderophore transport in Bacillus subtilis mediated by a novel one-component regulator.</title>
        <authorList>
            <person name="Gaballa A."/>
            <person name="Helmann J.D."/>
        </authorList>
    </citation>
    <scope>INDUCTION</scope>
    <source>
        <strain>168 / CU1065</strain>
    </source>
</reference>
<reference key="6">
    <citation type="journal article" date="2010" name="Genes Dev.">
        <title>Functional microdomains in bacterial membranes.</title>
        <authorList>
            <person name="Lopez D."/>
            <person name="Kolter R."/>
        </authorList>
    </citation>
    <scope>SUBCELLULAR LOCATION</scope>
    <source>
        <strain>168 / Marburg / ATCC 6051 / DSM 10 / JCM 1465 / NBRC 13719 / NCIMB 3610 / NRRL NRS-744 / VKM B-501</strain>
    </source>
</reference>
<reference key="7">
    <citation type="journal article" date="2012" name="Mol. Microbiol.">
        <title>The biofilm formation defect of a Bacillus subtilis flotillin-defective mutant involves the protease FtsH.</title>
        <authorList>
            <person name="Yepes A."/>
            <person name="Schneider J."/>
            <person name="Mielich B."/>
            <person name="Koch G."/>
            <person name="Garcia-Betancur J.C."/>
            <person name="Ramamurthi K.S."/>
            <person name="Vlamakis H."/>
            <person name="Lopez D."/>
        </authorList>
    </citation>
    <scope>SUBCELLULAR LOCATION</scope>
    <source>
        <strain>168 / Marburg / ATCC 6051 / DSM 10 / JCM 1465 / NBRC 13719 / NCIMB 3610 / NRRL NRS-744 / VKM B-501</strain>
    </source>
</reference>
<feature type="signal peptide" evidence="1">
    <location>
        <begin position="1"/>
        <end position="19"/>
    </location>
</feature>
<feature type="chain" id="PRO_0000031822" description="Iron-uptake system-binding protein">
    <location>
        <begin position="20"/>
        <end position="317"/>
    </location>
</feature>
<feature type="domain" description="Fe/B12 periplasmic-binding" evidence="2">
    <location>
        <begin position="57"/>
        <end position="317"/>
    </location>
</feature>
<feature type="lipid moiety-binding region" description="N-palmitoyl cysteine" evidence="1">
    <location>
        <position position="20"/>
    </location>
</feature>
<feature type="lipid moiety-binding region" description="S-diacylglycerol cysteine" evidence="1">
    <location>
        <position position="20"/>
    </location>
</feature>
<feature type="strand" evidence="9">
    <location>
        <begin position="37"/>
        <end position="43"/>
    </location>
</feature>
<feature type="strand" evidence="9">
    <location>
        <begin position="46"/>
        <end position="53"/>
    </location>
</feature>
<feature type="strand" evidence="9">
    <location>
        <begin position="57"/>
        <end position="59"/>
    </location>
</feature>
<feature type="helix" evidence="9">
    <location>
        <begin position="63"/>
        <end position="72"/>
    </location>
</feature>
<feature type="strand" evidence="9">
    <location>
        <begin position="77"/>
        <end position="82"/>
    </location>
</feature>
<feature type="helix" evidence="9">
    <location>
        <begin position="88"/>
        <end position="90"/>
    </location>
</feature>
<feature type="turn" evidence="9">
    <location>
        <begin position="91"/>
        <end position="93"/>
    </location>
</feature>
<feature type="strand" evidence="9">
    <location>
        <begin position="98"/>
        <end position="102"/>
    </location>
</feature>
<feature type="helix" evidence="9">
    <location>
        <begin position="108"/>
        <end position="114"/>
    </location>
</feature>
<feature type="strand" evidence="9">
    <location>
        <begin position="117"/>
        <end position="122"/>
    </location>
</feature>
<feature type="helix" evidence="9">
    <location>
        <begin position="127"/>
        <end position="134"/>
    </location>
</feature>
<feature type="strand" evidence="9">
    <location>
        <begin position="139"/>
        <end position="142"/>
    </location>
</feature>
<feature type="helix" evidence="9">
    <location>
        <begin position="146"/>
        <end position="148"/>
    </location>
</feature>
<feature type="helix" evidence="9">
    <location>
        <begin position="149"/>
        <end position="160"/>
    </location>
</feature>
<feature type="helix" evidence="9">
    <location>
        <begin position="163"/>
        <end position="183"/>
    </location>
</feature>
<feature type="helix" evidence="9">
    <location>
        <begin position="186"/>
        <end position="189"/>
    </location>
</feature>
<feature type="strand" evidence="9">
    <location>
        <begin position="193"/>
        <end position="199"/>
    </location>
</feature>
<feature type="strand" evidence="9">
    <location>
        <begin position="202"/>
        <end position="205"/>
    </location>
</feature>
<feature type="helix" evidence="9">
    <location>
        <begin position="213"/>
        <end position="216"/>
    </location>
</feature>
<feature type="turn" evidence="9">
    <location>
        <begin position="217"/>
        <end position="220"/>
    </location>
</feature>
<feature type="helix" evidence="9">
    <location>
        <begin position="226"/>
        <end position="230"/>
    </location>
</feature>
<feature type="strand" evidence="9">
    <location>
        <begin position="232"/>
        <end position="236"/>
    </location>
</feature>
<feature type="helix" evidence="9">
    <location>
        <begin position="239"/>
        <end position="245"/>
    </location>
</feature>
<feature type="strand" evidence="9">
    <location>
        <begin position="248"/>
        <end position="254"/>
    </location>
</feature>
<feature type="helix" evidence="9">
    <location>
        <begin position="256"/>
        <end position="258"/>
    </location>
</feature>
<feature type="helix" evidence="9">
    <location>
        <begin position="265"/>
        <end position="271"/>
    </location>
</feature>
<feature type="helix" evidence="9">
    <location>
        <begin position="273"/>
        <end position="276"/>
    </location>
</feature>
<feature type="helix" evidence="9">
    <location>
        <begin position="279"/>
        <end position="282"/>
    </location>
</feature>
<feature type="strand" evidence="9">
    <location>
        <begin position="286"/>
        <end position="288"/>
    </location>
</feature>
<feature type="strand" evidence="9">
    <location>
        <begin position="297"/>
        <end position="299"/>
    </location>
</feature>
<feature type="helix" evidence="9">
    <location>
        <begin position="300"/>
        <end position="314"/>
    </location>
</feature>
<accession>P40409</accession>
<protein>
    <recommendedName>
        <fullName>Iron-uptake system-binding protein</fullName>
    </recommendedName>
</protein>
<name>FEUA_BACSU</name>